<feature type="chain" id="PRO_0000336293" description="Imidazoleglycerol-phosphate dehydratase">
    <location>
        <begin position="1"/>
        <end position="208"/>
    </location>
</feature>
<reference key="1">
    <citation type="journal article" date="2006" name="PLoS Genet.">
        <title>Secrets of soil survival revealed by the genome sequence of Arthrobacter aurescens TC1.</title>
        <authorList>
            <person name="Mongodin E.F."/>
            <person name="Shapir N."/>
            <person name="Daugherty S.C."/>
            <person name="DeBoy R.T."/>
            <person name="Emerson J.B."/>
            <person name="Shvartzbeyn A."/>
            <person name="Radune D."/>
            <person name="Vamathevan J."/>
            <person name="Riggs F."/>
            <person name="Grinberg V."/>
            <person name="Khouri H.M."/>
            <person name="Wackett L.P."/>
            <person name="Nelson K.E."/>
            <person name="Sadowsky M.J."/>
        </authorList>
    </citation>
    <scope>NUCLEOTIDE SEQUENCE [LARGE SCALE GENOMIC DNA]</scope>
    <source>
        <strain>TC1</strain>
    </source>
</reference>
<organism>
    <name type="scientific">Paenarthrobacter aurescens (strain TC1)</name>
    <dbReference type="NCBI Taxonomy" id="290340"/>
    <lineage>
        <taxon>Bacteria</taxon>
        <taxon>Bacillati</taxon>
        <taxon>Actinomycetota</taxon>
        <taxon>Actinomycetes</taxon>
        <taxon>Micrococcales</taxon>
        <taxon>Micrococcaceae</taxon>
        <taxon>Paenarthrobacter</taxon>
    </lineage>
</organism>
<gene>
    <name evidence="1" type="primary">hisB</name>
    <name type="ordered locus">AAur_1605</name>
</gene>
<name>HIS7_PAEAT</name>
<evidence type="ECO:0000255" key="1">
    <source>
        <dbReference type="HAMAP-Rule" id="MF_00076"/>
    </source>
</evidence>
<protein>
    <recommendedName>
        <fullName evidence="1">Imidazoleglycerol-phosphate dehydratase</fullName>
        <shortName evidence="1">IGPD</shortName>
        <ecNumber evidence="1">4.2.1.19</ecNumber>
    </recommendedName>
</protein>
<sequence>MSETGATPTAARTARMERTTSESSVLVEINLDGSGVSDISTSVPFYDHMLTALCKHSLIDMTVKATGDTHIDAHHTVEDVAITFGEVLRQALGNKAGIRRFGEATVPLDEALAHAVVDVSGRPYLVHGGEPAGQEYHLIGGHFTGSLTRHVFEAITLHAGICLHMNVLAGRDPHHIVEAQFKAFARALRAAVESDPRVEGIPSTKGAL</sequence>
<keyword id="KW-0028">Amino-acid biosynthesis</keyword>
<keyword id="KW-0963">Cytoplasm</keyword>
<keyword id="KW-0368">Histidine biosynthesis</keyword>
<keyword id="KW-0456">Lyase</keyword>
<accession>A1R559</accession>
<dbReference type="EC" id="4.2.1.19" evidence="1"/>
<dbReference type="EMBL" id="CP000474">
    <property type="protein sequence ID" value="ABM06722.1"/>
    <property type="molecule type" value="Genomic_DNA"/>
</dbReference>
<dbReference type="RefSeq" id="WP_011774316.1">
    <property type="nucleotide sequence ID" value="NC_008711.1"/>
</dbReference>
<dbReference type="SMR" id="A1R559"/>
<dbReference type="STRING" id="290340.AAur_1605"/>
<dbReference type="KEGG" id="aau:AAur_1605"/>
<dbReference type="eggNOG" id="COG0131">
    <property type="taxonomic scope" value="Bacteria"/>
</dbReference>
<dbReference type="HOGENOM" id="CLU_044308_3_0_11"/>
<dbReference type="OrthoDB" id="9790411at2"/>
<dbReference type="UniPathway" id="UPA00031">
    <property type="reaction ID" value="UER00011"/>
</dbReference>
<dbReference type="Proteomes" id="UP000000637">
    <property type="component" value="Chromosome"/>
</dbReference>
<dbReference type="GO" id="GO:0005737">
    <property type="term" value="C:cytoplasm"/>
    <property type="evidence" value="ECO:0007669"/>
    <property type="project" value="UniProtKB-SubCell"/>
</dbReference>
<dbReference type="GO" id="GO:0004424">
    <property type="term" value="F:imidazoleglycerol-phosphate dehydratase activity"/>
    <property type="evidence" value="ECO:0007669"/>
    <property type="project" value="UniProtKB-UniRule"/>
</dbReference>
<dbReference type="GO" id="GO:0000105">
    <property type="term" value="P:L-histidine biosynthetic process"/>
    <property type="evidence" value="ECO:0007669"/>
    <property type="project" value="UniProtKB-UniRule"/>
</dbReference>
<dbReference type="CDD" id="cd07914">
    <property type="entry name" value="IGPD"/>
    <property type="match status" value="1"/>
</dbReference>
<dbReference type="FunFam" id="3.30.230.40:FF:000001">
    <property type="entry name" value="Imidazoleglycerol-phosphate dehydratase HisB"/>
    <property type="match status" value="1"/>
</dbReference>
<dbReference type="FunFam" id="3.30.230.40:FF:000003">
    <property type="entry name" value="Imidazoleglycerol-phosphate dehydratase HisB"/>
    <property type="match status" value="1"/>
</dbReference>
<dbReference type="Gene3D" id="3.30.230.40">
    <property type="entry name" value="Imidazole glycerol phosphate dehydratase, domain 1"/>
    <property type="match status" value="2"/>
</dbReference>
<dbReference type="HAMAP" id="MF_00076">
    <property type="entry name" value="HisB"/>
    <property type="match status" value="1"/>
</dbReference>
<dbReference type="InterPro" id="IPR038494">
    <property type="entry name" value="IGPD_sf"/>
</dbReference>
<dbReference type="InterPro" id="IPR000807">
    <property type="entry name" value="ImidazoleglycerolP_deHydtase"/>
</dbReference>
<dbReference type="InterPro" id="IPR020565">
    <property type="entry name" value="ImidazoleglycerP_deHydtase_CS"/>
</dbReference>
<dbReference type="InterPro" id="IPR020568">
    <property type="entry name" value="Ribosomal_Su5_D2-typ_SF"/>
</dbReference>
<dbReference type="NCBIfam" id="NF002110">
    <property type="entry name" value="PRK00951.1-6"/>
    <property type="match status" value="1"/>
</dbReference>
<dbReference type="NCBIfam" id="NF002111">
    <property type="entry name" value="PRK00951.2-1"/>
    <property type="match status" value="1"/>
</dbReference>
<dbReference type="NCBIfam" id="NF002114">
    <property type="entry name" value="PRK00951.2-4"/>
    <property type="match status" value="1"/>
</dbReference>
<dbReference type="PANTHER" id="PTHR23133:SF2">
    <property type="entry name" value="IMIDAZOLEGLYCEROL-PHOSPHATE DEHYDRATASE"/>
    <property type="match status" value="1"/>
</dbReference>
<dbReference type="PANTHER" id="PTHR23133">
    <property type="entry name" value="IMIDAZOLEGLYCEROL-PHOSPHATE DEHYDRATASE HIS7"/>
    <property type="match status" value="1"/>
</dbReference>
<dbReference type="Pfam" id="PF00475">
    <property type="entry name" value="IGPD"/>
    <property type="match status" value="1"/>
</dbReference>
<dbReference type="SUPFAM" id="SSF54211">
    <property type="entry name" value="Ribosomal protein S5 domain 2-like"/>
    <property type="match status" value="2"/>
</dbReference>
<dbReference type="PROSITE" id="PS00954">
    <property type="entry name" value="IGP_DEHYDRATASE_1"/>
    <property type="match status" value="1"/>
</dbReference>
<dbReference type="PROSITE" id="PS00955">
    <property type="entry name" value="IGP_DEHYDRATASE_2"/>
    <property type="match status" value="1"/>
</dbReference>
<comment type="catalytic activity">
    <reaction evidence="1">
        <text>D-erythro-1-(imidazol-4-yl)glycerol 3-phosphate = 3-(imidazol-4-yl)-2-oxopropyl phosphate + H2O</text>
        <dbReference type="Rhea" id="RHEA:11040"/>
        <dbReference type="ChEBI" id="CHEBI:15377"/>
        <dbReference type="ChEBI" id="CHEBI:57766"/>
        <dbReference type="ChEBI" id="CHEBI:58278"/>
        <dbReference type="EC" id="4.2.1.19"/>
    </reaction>
</comment>
<comment type="pathway">
    <text evidence="1">Amino-acid biosynthesis; L-histidine biosynthesis; L-histidine from 5-phospho-alpha-D-ribose 1-diphosphate: step 6/9.</text>
</comment>
<comment type="subcellular location">
    <subcellularLocation>
        <location evidence="1">Cytoplasm</location>
    </subcellularLocation>
</comment>
<comment type="similarity">
    <text evidence="1">Belongs to the imidazoleglycerol-phosphate dehydratase family.</text>
</comment>
<proteinExistence type="inferred from homology"/>